<accession>Q0WVR4</accession>
<accession>Q9LZU2</accession>
<feature type="chain" id="PRO_0000456197" description="Lysine-specific demethylase JMJ32">
    <location>
        <begin position="1"/>
        <end position="345"/>
    </location>
</feature>
<feature type="domain" description="JmjC" evidence="2">
    <location>
        <begin position="122"/>
        <end position="315"/>
    </location>
</feature>
<feature type="binding site" evidence="2">
    <location>
        <position position="174"/>
    </location>
    <ligand>
        <name>Fe cation</name>
        <dbReference type="ChEBI" id="CHEBI:24875"/>
        <note>catalytic</note>
    </ligand>
</feature>
<feature type="binding site" evidence="2">
    <location>
        <position position="176"/>
    </location>
    <ligand>
        <name>Fe cation</name>
        <dbReference type="ChEBI" id="CHEBI:24875"/>
        <note>catalytic</note>
    </ligand>
</feature>
<feature type="binding site" evidence="2">
    <location>
        <position position="281"/>
    </location>
    <ligand>
        <name>Fe cation</name>
        <dbReference type="ChEBI" id="CHEBI:24875"/>
        <note>catalytic</note>
    </ligand>
</feature>
<organism>
    <name type="scientific">Arabidopsis thaliana</name>
    <name type="common">Mouse-ear cress</name>
    <dbReference type="NCBI Taxonomy" id="3702"/>
    <lineage>
        <taxon>Eukaryota</taxon>
        <taxon>Viridiplantae</taxon>
        <taxon>Streptophyta</taxon>
        <taxon>Embryophyta</taxon>
        <taxon>Tracheophyta</taxon>
        <taxon>Spermatophyta</taxon>
        <taxon>Magnoliopsida</taxon>
        <taxon>eudicotyledons</taxon>
        <taxon>Gunneridae</taxon>
        <taxon>Pentapetalae</taxon>
        <taxon>rosids</taxon>
        <taxon>malvids</taxon>
        <taxon>Brassicales</taxon>
        <taxon>Brassicaceae</taxon>
        <taxon>Camelineae</taxon>
        <taxon>Arabidopsis</taxon>
    </lineage>
</organism>
<evidence type="ECO:0000250" key="1">
    <source>
        <dbReference type="UniProtKB" id="Q8GUI6"/>
    </source>
</evidence>
<evidence type="ECO:0000255" key="2">
    <source>
        <dbReference type="PROSITE-ProRule" id="PRU00538"/>
    </source>
</evidence>
<evidence type="ECO:0000269" key="3">
    <source>
    </source>
</evidence>
<evidence type="ECO:0000269" key="4">
    <source>
    </source>
</evidence>
<evidence type="ECO:0000269" key="5">
    <source>
    </source>
</evidence>
<evidence type="ECO:0000269" key="6">
    <source>
    </source>
</evidence>
<evidence type="ECO:0000269" key="7">
    <source>
    </source>
</evidence>
<evidence type="ECO:0000303" key="8">
    <source>
    </source>
</evidence>
<evidence type="ECO:0000305" key="9"/>
<evidence type="ECO:0000312" key="10">
    <source>
        <dbReference type="Araport" id="AT3G45880"/>
    </source>
</evidence>
<evidence type="ECO:0000312" key="11">
    <source>
        <dbReference type="EMBL" id="CAB82812.1"/>
    </source>
</evidence>
<dbReference type="EC" id="1.14.11.68" evidence="4"/>
<dbReference type="EMBL" id="AL162459">
    <property type="protein sequence ID" value="CAB82812.1"/>
    <property type="status" value="ALT_SEQ"/>
    <property type="molecule type" value="Genomic_DNA"/>
</dbReference>
<dbReference type="EMBL" id="CP002686">
    <property type="protein sequence ID" value="AEE78086.1"/>
    <property type="molecule type" value="Genomic_DNA"/>
</dbReference>
<dbReference type="EMBL" id="AK226677">
    <property type="protein sequence ID" value="BAE98784.1"/>
    <property type="molecule type" value="mRNA"/>
</dbReference>
<dbReference type="PIR" id="T47528">
    <property type="entry name" value="T47528"/>
</dbReference>
<dbReference type="RefSeq" id="NP_190174.2">
    <property type="nucleotide sequence ID" value="NM_114457.3"/>
</dbReference>
<dbReference type="SMR" id="Q0WVR4"/>
<dbReference type="FunCoup" id="Q0WVR4">
    <property type="interactions" value="3062"/>
</dbReference>
<dbReference type="IntAct" id="Q0WVR4">
    <property type="interactions" value="7"/>
</dbReference>
<dbReference type="STRING" id="3702.Q0WVR4"/>
<dbReference type="PaxDb" id="3702-AT3G45880.1"/>
<dbReference type="ProteomicsDB" id="185660"/>
<dbReference type="EnsemblPlants" id="AT3G45880.1">
    <property type="protein sequence ID" value="AT3G45880.1"/>
    <property type="gene ID" value="AT3G45880"/>
</dbReference>
<dbReference type="GeneID" id="823731"/>
<dbReference type="Gramene" id="AT3G45880.1">
    <property type="protein sequence ID" value="AT3G45880.1"/>
    <property type="gene ID" value="AT3G45880"/>
</dbReference>
<dbReference type="KEGG" id="ath:AT3G45880"/>
<dbReference type="Araport" id="AT3G45880"/>
<dbReference type="TAIR" id="AT3G45880">
    <property type="gene designation" value="JMJ32"/>
</dbReference>
<dbReference type="eggNOG" id="KOG2508">
    <property type="taxonomic scope" value="Eukaryota"/>
</dbReference>
<dbReference type="HOGENOM" id="CLU_016785_6_0_1"/>
<dbReference type="InParanoid" id="Q0WVR4"/>
<dbReference type="OMA" id="YWHDMEF"/>
<dbReference type="PRO" id="PR:Q0WVR4"/>
<dbReference type="Proteomes" id="UP000006548">
    <property type="component" value="Chromosome 3"/>
</dbReference>
<dbReference type="ExpressionAtlas" id="Q0WVR4">
    <property type="expression patterns" value="baseline and differential"/>
</dbReference>
<dbReference type="GO" id="GO:0005737">
    <property type="term" value="C:cytoplasm"/>
    <property type="evidence" value="ECO:0000314"/>
    <property type="project" value="UniProtKB"/>
</dbReference>
<dbReference type="GO" id="GO:0005783">
    <property type="term" value="C:endoplasmic reticulum"/>
    <property type="evidence" value="ECO:0000314"/>
    <property type="project" value="UniProtKB"/>
</dbReference>
<dbReference type="GO" id="GO:0005634">
    <property type="term" value="C:nucleus"/>
    <property type="evidence" value="ECO:0000314"/>
    <property type="project" value="UniProtKB"/>
</dbReference>
<dbReference type="GO" id="GO:0071558">
    <property type="term" value="F:histone H3K27me2/H3K27me3 demethylase activity"/>
    <property type="evidence" value="ECO:0000314"/>
    <property type="project" value="UniProtKB"/>
</dbReference>
<dbReference type="GO" id="GO:0046872">
    <property type="term" value="F:metal ion binding"/>
    <property type="evidence" value="ECO:0007669"/>
    <property type="project" value="UniProtKB-KW"/>
</dbReference>
<dbReference type="GO" id="GO:0045814">
    <property type="term" value="P:negative regulation of gene expression, epigenetic"/>
    <property type="evidence" value="ECO:0000314"/>
    <property type="project" value="UniProtKB"/>
</dbReference>
<dbReference type="GO" id="GO:0080022">
    <property type="term" value="P:primary root development"/>
    <property type="evidence" value="ECO:0000315"/>
    <property type="project" value="UniProtKB"/>
</dbReference>
<dbReference type="GO" id="GO:0009787">
    <property type="term" value="P:regulation of abscisic acid-activated signaling pathway"/>
    <property type="evidence" value="ECO:0000315"/>
    <property type="project" value="UniProtKB"/>
</dbReference>
<dbReference type="GO" id="GO:1900457">
    <property type="term" value="P:regulation of brassinosteroid mediated signaling pathway"/>
    <property type="evidence" value="ECO:0000315"/>
    <property type="project" value="UniProtKB"/>
</dbReference>
<dbReference type="GO" id="GO:2000028">
    <property type="term" value="P:regulation of photoperiodism, flowering"/>
    <property type="evidence" value="ECO:0000315"/>
    <property type="project" value="UniProtKB"/>
</dbReference>
<dbReference type="GO" id="GO:1900140">
    <property type="term" value="P:regulation of seedling development"/>
    <property type="evidence" value="ECO:0000315"/>
    <property type="project" value="UniProtKB"/>
</dbReference>
<dbReference type="GO" id="GO:0009737">
    <property type="term" value="P:response to abscisic acid"/>
    <property type="evidence" value="ECO:0000315"/>
    <property type="project" value="UniProtKB"/>
</dbReference>
<dbReference type="GO" id="GO:0009266">
    <property type="term" value="P:response to temperature stimulus"/>
    <property type="evidence" value="ECO:0000315"/>
    <property type="project" value="UniProtKB"/>
</dbReference>
<dbReference type="FunFam" id="2.60.120.10:FF:000147">
    <property type="entry name" value="2-oxoglutarate (2OG) and Fe(II)-dependent oxygenase superfamily protein"/>
    <property type="match status" value="1"/>
</dbReference>
<dbReference type="Gene3D" id="2.60.120.10">
    <property type="entry name" value="Jelly Rolls"/>
    <property type="match status" value="1"/>
</dbReference>
<dbReference type="InterPro" id="IPR041667">
    <property type="entry name" value="Cupin_8"/>
</dbReference>
<dbReference type="InterPro" id="IPR003347">
    <property type="entry name" value="JmjC_dom"/>
</dbReference>
<dbReference type="InterPro" id="IPR014710">
    <property type="entry name" value="RmlC-like_jellyroll"/>
</dbReference>
<dbReference type="PANTHER" id="PTHR12461:SF99">
    <property type="entry name" value="BIFUNCTIONAL PEPTIDASE AND (3S)-LYSYL HYDROXYLASE JMJD7"/>
    <property type="match status" value="1"/>
</dbReference>
<dbReference type="PANTHER" id="PTHR12461">
    <property type="entry name" value="HYPOXIA-INDUCIBLE FACTOR 1 ALPHA INHIBITOR-RELATED"/>
    <property type="match status" value="1"/>
</dbReference>
<dbReference type="Pfam" id="PF13621">
    <property type="entry name" value="Cupin_8"/>
    <property type="match status" value="1"/>
</dbReference>
<dbReference type="SMART" id="SM00558">
    <property type="entry name" value="JmjC"/>
    <property type="match status" value="1"/>
</dbReference>
<dbReference type="SUPFAM" id="SSF51197">
    <property type="entry name" value="Clavaminate synthase-like"/>
    <property type="match status" value="1"/>
</dbReference>
<dbReference type="PROSITE" id="PS51184">
    <property type="entry name" value="JMJC"/>
    <property type="match status" value="1"/>
</dbReference>
<keyword id="KW-0938">Abscisic acid signaling pathway</keyword>
<keyword id="KW-1070">Brassinosteroid signaling pathway</keyword>
<keyword id="KW-0963">Cytoplasm</keyword>
<keyword id="KW-0256">Endoplasmic reticulum</keyword>
<keyword id="KW-0408">Iron</keyword>
<keyword id="KW-0479">Metal-binding</keyword>
<keyword id="KW-0539">Nucleus</keyword>
<keyword id="KW-0560">Oxidoreductase</keyword>
<keyword id="KW-1185">Reference proteome</keyword>
<comment type="function">
    <text evidence="4 5 6 7">Histone demethylase that demethylates 'Lys-27' (H3K27me) of histone H3 with a specific activity for H3K27me3 and H3K27me2, and involved in the regulation of gene expression (PubMed:25267112, PubMed:33324437). No activity on H3K27me1 (PubMed:25267112). Together with JMJ30, regulates the flowering-repressor FLOWERING LOCUS C (FLC) locus by removing the repressive histone modification H3 lysine 27 trimethylation (H3K27me3), especially at elevated temperatures (e.g. 29 degrees Celsius), thus preventing extreme precocious flowering (PubMed:25267112). JMJ30 and JMJ32 are regulators involved in the integration of abscisic acid (ABA) and brassinosteroids (BR) signaling pathways (PubMed:33324437). Together with JMJ30, controls ABA-mediated growth arrest during the post-germination stage in unfavorable conditions, and responses to ABA during root development, via the removal of repressive histone mark (H3K27me3) from the SnRK2.8 promoter, thus promoting SnRK2.8 expression and subsequent kinase-dependent ABI3 activation (PubMed:30859592, PubMed:30983495). In addition, removes the repressive histone marks (H3K27me3) from the BZR1 locus in response to stress and ABA, thus activating the BR signaling pathway which, in turn, inhibits the ABA signaling pathway (PubMed:33324437).</text>
</comment>
<comment type="catalytic activity">
    <reaction evidence="4">
        <text>N(6),N(6),N(6)-trimethyl-L-lysyl(27)-[histone H3] + 2-oxoglutarate + O2 = N(6),N(6)-dimethyl-L-lysyl(27)-[histone H3] + formaldehyde + succinate + CO2</text>
        <dbReference type="Rhea" id="RHEA:60228"/>
        <dbReference type="Rhea" id="RHEA-COMP:15535"/>
        <dbReference type="Rhea" id="RHEA-COMP:15539"/>
        <dbReference type="ChEBI" id="CHEBI:15379"/>
        <dbReference type="ChEBI" id="CHEBI:16526"/>
        <dbReference type="ChEBI" id="CHEBI:16810"/>
        <dbReference type="ChEBI" id="CHEBI:16842"/>
        <dbReference type="ChEBI" id="CHEBI:30031"/>
        <dbReference type="ChEBI" id="CHEBI:61961"/>
        <dbReference type="ChEBI" id="CHEBI:61976"/>
    </reaction>
    <physiologicalReaction direction="left-to-right" evidence="4">
        <dbReference type="Rhea" id="RHEA:60229"/>
    </physiologicalReaction>
</comment>
<comment type="catalytic activity">
    <reaction evidence="4">
        <text>N(6),N(6)-dimethyl-L-lysyl(27)-[histone H3] + 2-oxoglutarate + O2 = N(6)-methyl-L-lysyl(27)-[histone H3] + formaldehyde + succinate + CO2</text>
        <dbReference type="Rhea" id="RHEA:60232"/>
        <dbReference type="Rhea" id="RHEA-COMP:15539"/>
        <dbReference type="Rhea" id="RHEA-COMP:15544"/>
        <dbReference type="ChEBI" id="CHEBI:15379"/>
        <dbReference type="ChEBI" id="CHEBI:16526"/>
        <dbReference type="ChEBI" id="CHEBI:16810"/>
        <dbReference type="ChEBI" id="CHEBI:16842"/>
        <dbReference type="ChEBI" id="CHEBI:30031"/>
        <dbReference type="ChEBI" id="CHEBI:61929"/>
        <dbReference type="ChEBI" id="CHEBI:61976"/>
    </reaction>
    <physiologicalReaction direction="left-to-right" evidence="4">
        <dbReference type="Rhea" id="RHEA:60233"/>
    </physiologicalReaction>
</comment>
<comment type="catalytic activity">
    <reaction evidence="4">
        <text>N(6),N(6),N(6)-trimethyl-L-lysyl(27)-[histone H3] + 2 2-oxoglutarate + 2 O2 = N(6)-methyl-L-lysyl(27)-[histone H3] + 2 formaldehyde + 2 succinate + 2 CO2</text>
        <dbReference type="Rhea" id="RHEA:60224"/>
        <dbReference type="Rhea" id="RHEA-COMP:15535"/>
        <dbReference type="Rhea" id="RHEA-COMP:15544"/>
        <dbReference type="ChEBI" id="CHEBI:15379"/>
        <dbReference type="ChEBI" id="CHEBI:16526"/>
        <dbReference type="ChEBI" id="CHEBI:16810"/>
        <dbReference type="ChEBI" id="CHEBI:16842"/>
        <dbReference type="ChEBI" id="CHEBI:30031"/>
        <dbReference type="ChEBI" id="CHEBI:61929"/>
        <dbReference type="ChEBI" id="CHEBI:61961"/>
        <dbReference type="EC" id="1.14.11.68"/>
    </reaction>
    <physiologicalReaction direction="left-to-right" evidence="4">
        <dbReference type="Rhea" id="RHEA:60225"/>
    </physiologicalReaction>
</comment>
<comment type="cofactor">
    <cofactor evidence="1">
        <name>Fe(2+)</name>
        <dbReference type="ChEBI" id="CHEBI:29033"/>
    </cofactor>
    <text evidence="1">Binds 1 Fe(2+) ion per subunit.</text>
</comment>
<comment type="subcellular location">
    <subcellularLocation>
        <location evidence="4">Nucleus</location>
    </subcellularLocation>
    <subcellularLocation>
        <location evidence="4">Cytoplasm</location>
    </subcellularLocation>
    <subcellularLocation>
        <location evidence="4">Endoplasmic reticulum</location>
    </subcellularLocation>
    <text evidence="4">Predominantly localized in the nucleus.</text>
</comment>
<comment type="tissue specificity">
    <text evidence="3 4 5 7">Expressed ubiquitously including in vasculatures, leaves, siliques, roots and inflorescences (PubMed:18713399, PubMed:25267112). Present in the root meristem (PubMed:30859592). Accumulates in cotyledons and root tips of young seedlings (PubMed:33324437).</text>
</comment>
<comment type="disruption phenotype">
    <text evidence="4 5 6 7">No visible phenotype under normal growth conditions (PubMed:30859592). Reduced abscisic acid (ABA)-mediated growth arrest during the post-germination stage, with stronger effect in plants lacking both JMJ30 and JMJ32 (PubMed:30859592). The double mutant missing JMJ30 and JMJ32 exhibits an early-flowering phenotype at elevated temperatures (e.g. 29 degrees Celsius), associated with increased H3K27me3 levels at the FLC locus and decreased FLC expression (PubMed:25267112). The double mutant jmj30 jmj32 has longer primary roots (PubMed:30983495). In jmj30-2 jmj32-1 double mutants, reduced brassinosteroids (BR) mediated repression of ABA-inducible genes (e.g. ABI5, ABF2, ABF3 and ABF4) (PubMed:33324437).</text>
</comment>
<comment type="similarity">
    <text evidence="9">Belongs to the JARID1 histone demethylase family.</text>
</comment>
<comment type="sequence caution" evidence="9">
    <conflict type="erroneous gene model prediction">
        <sequence resource="EMBL-CDS" id="CAB82812"/>
    </conflict>
</comment>
<reference key="1">
    <citation type="journal article" date="2000" name="Nature">
        <title>Sequence and analysis of chromosome 3 of the plant Arabidopsis thaliana.</title>
        <authorList>
            <person name="Salanoubat M."/>
            <person name="Lemcke K."/>
            <person name="Rieger M."/>
            <person name="Ansorge W."/>
            <person name="Unseld M."/>
            <person name="Fartmann B."/>
            <person name="Valle G."/>
            <person name="Bloecker H."/>
            <person name="Perez-Alonso M."/>
            <person name="Obermaier B."/>
            <person name="Delseny M."/>
            <person name="Boutry M."/>
            <person name="Grivell L.A."/>
            <person name="Mache R."/>
            <person name="Puigdomenech P."/>
            <person name="De Simone V."/>
            <person name="Choisne N."/>
            <person name="Artiguenave F."/>
            <person name="Robert C."/>
            <person name="Brottier P."/>
            <person name="Wincker P."/>
            <person name="Cattolico L."/>
            <person name="Weissenbach J."/>
            <person name="Saurin W."/>
            <person name="Quetier F."/>
            <person name="Schaefer M."/>
            <person name="Mueller-Auer S."/>
            <person name="Gabel C."/>
            <person name="Fuchs M."/>
            <person name="Benes V."/>
            <person name="Wurmbach E."/>
            <person name="Drzonek H."/>
            <person name="Erfle H."/>
            <person name="Jordan N."/>
            <person name="Bangert S."/>
            <person name="Wiedelmann R."/>
            <person name="Kranz H."/>
            <person name="Voss H."/>
            <person name="Holland R."/>
            <person name="Brandt P."/>
            <person name="Nyakatura G."/>
            <person name="Vezzi A."/>
            <person name="D'Angelo M."/>
            <person name="Pallavicini A."/>
            <person name="Toppo S."/>
            <person name="Simionati B."/>
            <person name="Conrad A."/>
            <person name="Hornischer K."/>
            <person name="Kauer G."/>
            <person name="Loehnert T.-H."/>
            <person name="Nordsiek G."/>
            <person name="Reichelt J."/>
            <person name="Scharfe M."/>
            <person name="Schoen O."/>
            <person name="Bargues M."/>
            <person name="Terol J."/>
            <person name="Climent J."/>
            <person name="Navarro P."/>
            <person name="Collado C."/>
            <person name="Perez-Perez A."/>
            <person name="Ottenwaelder B."/>
            <person name="Duchemin D."/>
            <person name="Cooke R."/>
            <person name="Laudie M."/>
            <person name="Berger-Llauro C."/>
            <person name="Purnelle B."/>
            <person name="Masuy D."/>
            <person name="de Haan M."/>
            <person name="Maarse A.C."/>
            <person name="Alcaraz J.-P."/>
            <person name="Cottet A."/>
            <person name="Casacuberta E."/>
            <person name="Monfort A."/>
            <person name="Argiriou A."/>
            <person name="Flores M."/>
            <person name="Liguori R."/>
            <person name="Vitale D."/>
            <person name="Mannhaupt G."/>
            <person name="Haase D."/>
            <person name="Schoof H."/>
            <person name="Rudd S."/>
            <person name="Zaccaria P."/>
            <person name="Mewes H.-W."/>
            <person name="Mayer K.F.X."/>
            <person name="Kaul S."/>
            <person name="Town C.D."/>
            <person name="Koo H.L."/>
            <person name="Tallon L.J."/>
            <person name="Jenkins J."/>
            <person name="Rooney T."/>
            <person name="Rizzo M."/>
            <person name="Walts A."/>
            <person name="Utterback T."/>
            <person name="Fujii C.Y."/>
            <person name="Shea T.P."/>
            <person name="Creasy T.H."/>
            <person name="Haas B."/>
            <person name="Maiti R."/>
            <person name="Wu D."/>
            <person name="Peterson J."/>
            <person name="Van Aken S."/>
            <person name="Pai G."/>
            <person name="Militscher J."/>
            <person name="Sellers P."/>
            <person name="Gill J.E."/>
            <person name="Feldblyum T.V."/>
            <person name="Preuss D."/>
            <person name="Lin X."/>
            <person name="Nierman W.C."/>
            <person name="Salzberg S.L."/>
            <person name="White O."/>
            <person name="Venter J.C."/>
            <person name="Fraser C.M."/>
            <person name="Kaneko T."/>
            <person name="Nakamura Y."/>
            <person name="Sato S."/>
            <person name="Kato T."/>
            <person name="Asamizu E."/>
            <person name="Sasamoto S."/>
            <person name="Kimura T."/>
            <person name="Idesawa K."/>
            <person name="Kawashima K."/>
            <person name="Kishida Y."/>
            <person name="Kiyokawa C."/>
            <person name="Kohara M."/>
            <person name="Matsumoto M."/>
            <person name="Matsuno A."/>
            <person name="Muraki A."/>
            <person name="Nakayama S."/>
            <person name="Nakazaki N."/>
            <person name="Shinpo S."/>
            <person name="Takeuchi C."/>
            <person name="Wada T."/>
            <person name="Watanabe A."/>
            <person name="Yamada M."/>
            <person name="Yasuda M."/>
            <person name="Tabata S."/>
        </authorList>
    </citation>
    <scope>NUCLEOTIDE SEQUENCE [LARGE SCALE GENOMIC DNA]</scope>
    <source>
        <strain>cv. Columbia</strain>
    </source>
</reference>
<reference key="2">
    <citation type="journal article" date="2017" name="Plant J.">
        <title>Araport11: a complete reannotation of the Arabidopsis thaliana reference genome.</title>
        <authorList>
            <person name="Cheng C.Y."/>
            <person name="Krishnakumar V."/>
            <person name="Chan A.P."/>
            <person name="Thibaud-Nissen F."/>
            <person name="Schobel S."/>
            <person name="Town C.D."/>
        </authorList>
    </citation>
    <scope>GENOME REANNOTATION</scope>
    <source>
        <strain>cv. Columbia</strain>
    </source>
</reference>
<reference key="3">
    <citation type="submission" date="2006-07" db="EMBL/GenBank/DDBJ databases">
        <title>Large-scale analysis of RIKEN Arabidopsis full-length (RAFL) cDNAs.</title>
        <authorList>
            <person name="Totoki Y."/>
            <person name="Seki M."/>
            <person name="Ishida J."/>
            <person name="Nakajima M."/>
            <person name="Enju A."/>
            <person name="Kamiya A."/>
            <person name="Narusaka M."/>
            <person name="Shin-i T."/>
            <person name="Nakagawa M."/>
            <person name="Sakamoto N."/>
            <person name="Oishi K."/>
            <person name="Kohara Y."/>
            <person name="Kobayashi M."/>
            <person name="Toyoda A."/>
            <person name="Sakaki Y."/>
            <person name="Sakurai T."/>
            <person name="Iida K."/>
            <person name="Akiyama K."/>
            <person name="Satou M."/>
            <person name="Toyoda T."/>
            <person name="Konagaya A."/>
            <person name="Carninci P."/>
            <person name="Kawai J."/>
            <person name="Hayashizaki Y."/>
            <person name="Shinozaki K."/>
        </authorList>
    </citation>
    <scope>NUCLEOTIDE SEQUENCE [LARGE SCALE MRNA]</scope>
    <source>
        <strain>cv. Columbia</strain>
    </source>
</reference>
<reference key="4">
    <citation type="journal article" date="2008" name="J. Integr. Plant Biol.">
        <title>Comparative analysis of JmjC domain-containing proteins reveals the potential histone demethylases in Arabidopsis and rice.</title>
        <authorList>
            <person name="Lu F."/>
            <person name="Li G."/>
            <person name="Cui X."/>
            <person name="Liu C."/>
            <person name="Wang X.-J."/>
            <person name="Cao X."/>
        </authorList>
    </citation>
    <scope>GENE FAMILY</scope>
    <scope>NOMENCLATURE</scope>
    <scope>TISSUE SPECIFICITY</scope>
</reference>
<reference key="5">
    <citation type="journal article" date="2014" name="Nat. Commun.">
        <title>Jumonji demethylases moderate precocious flowering at elevated temperature via regulation of FLC in Arabidopsis.</title>
        <authorList>
            <person name="Gan E.-S."/>
            <person name="Xu Y."/>
            <person name="Wong J.-Y."/>
            <person name="Goh J.G."/>
            <person name="Sun B."/>
            <person name="Wee W.-Y."/>
            <person name="Huang J."/>
            <person name="Ito T."/>
        </authorList>
    </citation>
    <scope>FUNCTION</scope>
    <scope>DISRUPTION PHENOTYPE</scope>
    <scope>CATALYTIC ACTIVITY</scope>
    <scope>TISSUE SPECIFICITY</scope>
    <scope>SUBCELLULAR LOCATION</scope>
    <source>
        <strain>cv. Columbia</strain>
    </source>
</reference>
<reference key="6">
    <citation type="journal article" date="2019" name="Plant Cell Environ.">
        <title>Abscisic acid-dependent histone demethylation during postgermination growth arrest in Arabidopsis.</title>
        <authorList>
            <person name="Wu J."/>
            <person name="Ichihashi Y."/>
            <person name="Suzuki T."/>
            <person name="Shibata A."/>
            <person name="Shirasu K."/>
            <person name="Yamaguchi N."/>
            <person name="Ito T."/>
        </authorList>
    </citation>
    <scope>FUNCTION</scope>
    <scope>DISRUPTION PHENOTYPE</scope>
    <scope>TISSUE SPECIFICITY</scope>
    <source>
        <strain>cv. Columbia</strain>
    </source>
</reference>
<reference key="7">
    <citation type="journal article" date="2019" name="Plant Signal. Behav.">
        <title>Histone demethylases control root elongation in response to stress-signaling hormone abscisic acid.</title>
        <authorList>
            <person name="Wu J."/>
            <person name="Yamaguchi N."/>
            <person name="Ito T."/>
        </authorList>
    </citation>
    <scope>FUNCTION</scope>
    <scope>DISRUPTION PHENOTYPE</scope>
    <source>
        <strain>cv. Columbia</strain>
    </source>
</reference>
<reference key="8">
    <citation type="journal article" date="2020" name="Front. Plant Sci.">
        <title>Histone demethylases coordinate the antagonistic interaction between abscisic acid and brassinosteroid signaling in Arabidopsis.</title>
        <authorList>
            <person name="Wu J."/>
            <person name="Yan M."/>
            <person name="Zhang D."/>
            <person name="Zhou D."/>
            <person name="Yamaguchi N."/>
            <person name="Ito T."/>
        </authorList>
    </citation>
    <scope>FUNCTION</scope>
    <scope>DISRUPTION PHENOTYPE</scope>
    <scope>TISSUE SPECIFICITY</scope>
    <source>
        <strain>cv. Columbia</strain>
    </source>
</reference>
<proteinExistence type="evidence at protein level"/>
<protein>
    <recommendedName>
        <fullName evidence="8">Lysine-specific demethylase JMJ32</fullName>
        <ecNumber evidence="4">1.14.11.68</ecNumber>
    </recommendedName>
    <alternativeName>
        <fullName evidence="8">Jumonji domain-containing protein 32</fullName>
        <shortName evidence="8">AtJMJ32</shortName>
        <shortName evidence="8">Protein JUMONJI 32</shortName>
    </alternativeName>
    <alternativeName>
        <fullName evidence="8">Lysine-specific histone demethylase JMJ32</fullName>
    </alternativeName>
    <alternativeName>
        <fullName evidence="9">[histone H3]-trimethyl-L-lysine(27) monodemethylase JMJ32</fullName>
    </alternativeName>
</protein>
<sequence length="345" mass="39123">MAKEIENLWREVRELSLGTKIDRFDSQPSPVKFLRNYVSQSKPCVISKAITHWPALKLWSDPAYLTGALSDDVVSLHLTPNGCADAVTGDSDLCFASAHVEKVLFPEALKVVQSSCKGLKVGYLQQQNDCFRTEYSTVALDCDGDIEWATEAFGCSPEAVNLWIGTDDSVTSFHKDHYENLYAVVSGEKHFLLLPPTDVHRLYIEQYPAANYSYHRDTDAFKLEVEEPVRHVPWSSVDPYPSPEKEASERLKFPLFFDGPKPFHCTVKAGEVLYLPSMWFHHVSQTPGDGGYTIAVNYWYDMQFDIKYAYFNFLQSLLYKSSSLNPVLSWREDEDSESSDAEIAP</sequence>
<gene>
    <name evidence="8" type="primary">JMJ32</name>
    <name evidence="10" type="ordered locus">At3g45880</name>
    <name evidence="11" type="ORF">F16L2.90</name>
</gene>
<name>JMJ32_ARATH</name>